<gene>
    <name type="ordered locus">VFMJ11_A0899</name>
</gene>
<dbReference type="EC" id="3.1.3.-" evidence="1"/>
<dbReference type="EMBL" id="CP001133">
    <property type="protein sequence ID" value="ACH64312.1"/>
    <property type="molecule type" value="Genomic_DNA"/>
</dbReference>
<dbReference type="RefSeq" id="WP_012535412.1">
    <property type="nucleotide sequence ID" value="NC_011186.1"/>
</dbReference>
<dbReference type="SMR" id="B5EUS9"/>
<dbReference type="KEGG" id="vfm:VFMJ11_A0899"/>
<dbReference type="HOGENOM" id="CLU_061999_0_1_6"/>
<dbReference type="Proteomes" id="UP000001857">
    <property type="component" value="Chromosome II"/>
</dbReference>
<dbReference type="GO" id="GO:0005829">
    <property type="term" value="C:cytosol"/>
    <property type="evidence" value="ECO:0007669"/>
    <property type="project" value="TreeGrafter"/>
</dbReference>
<dbReference type="GO" id="GO:0016791">
    <property type="term" value="F:phosphatase activity"/>
    <property type="evidence" value="ECO:0007669"/>
    <property type="project" value="UniProtKB-UniRule"/>
</dbReference>
<dbReference type="GO" id="GO:0008270">
    <property type="term" value="F:zinc ion binding"/>
    <property type="evidence" value="ECO:0007669"/>
    <property type="project" value="UniProtKB-UniRule"/>
</dbReference>
<dbReference type="GO" id="GO:0071978">
    <property type="term" value="P:bacterial-type flagellum-dependent swarming motility"/>
    <property type="evidence" value="ECO:0007669"/>
    <property type="project" value="TreeGrafter"/>
</dbReference>
<dbReference type="CDD" id="cd07437">
    <property type="entry name" value="PHP_HisPPase_Ycdx_like"/>
    <property type="match status" value="1"/>
</dbReference>
<dbReference type="Gene3D" id="3.20.20.140">
    <property type="entry name" value="Metal-dependent hydrolases"/>
    <property type="match status" value="1"/>
</dbReference>
<dbReference type="HAMAP" id="MF_01561">
    <property type="entry name" value="YcdX_phosphat"/>
    <property type="match status" value="1"/>
</dbReference>
<dbReference type="InterPro" id="IPR023710">
    <property type="entry name" value="Phosphatase_YcdX_put"/>
</dbReference>
<dbReference type="InterPro" id="IPR004013">
    <property type="entry name" value="PHP_dom"/>
</dbReference>
<dbReference type="InterPro" id="IPR050243">
    <property type="entry name" value="PHP_phosphatase"/>
</dbReference>
<dbReference type="InterPro" id="IPR003141">
    <property type="entry name" value="Pol/His_phosphatase_N"/>
</dbReference>
<dbReference type="InterPro" id="IPR016195">
    <property type="entry name" value="Pol/histidinol_Pase-like"/>
</dbReference>
<dbReference type="NCBIfam" id="NF006702">
    <property type="entry name" value="PRK09248.1"/>
    <property type="match status" value="1"/>
</dbReference>
<dbReference type="PANTHER" id="PTHR36928">
    <property type="entry name" value="PHOSPHATASE YCDX-RELATED"/>
    <property type="match status" value="1"/>
</dbReference>
<dbReference type="PANTHER" id="PTHR36928:SF1">
    <property type="entry name" value="PHOSPHATASE YCDX-RELATED"/>
    <property type="match status" value="1"/>
</dbReference>
<dbReference type="Pfam" id="PF02811">
    <property type="entry name" value="PHP"/>
    <property type="match status" value="1"/>
</dbReference>
<dbReference type="Pfam" id="PF13263">
    <property type="entry name" value="PHP_C"/>
    <property type="match status" value="1"/>
</dbReference>
<dbReference type="SMART" id="SM00481">
    <property type="entry name" value="POLIIIAc"/>
    <property type="match status" value="1"/>
</dbReference>
<dbReference type="SUPFAM" id="SSF89550">
    <property type="entry name" value="PHP domain-like"/>
    <property type="match status" value="1"/>
</dbReference>
<name>Y3699_ALIFM</name>
<proteinExistence type="inferred from homology"/>
<reference key="1">
    <citation type="submission" date="2008-08" db="EMBL/GenBank/DDBJ databases">
        <title>Complete sequence of Vibrio fischeri strain MJ11.</title>
        <authorList>
            <person name="Mandel M.J."/>
            <person name="Stabb E.V."/>
            <person name="Ruby E.G."/>
            <person name="Ferriera S."/>
            <person name="Johnson J."/>
            <person name="Kravitz S."/>
            <person name="Beeson K."/>
            <person name="Sutton G."/>
            <person name="Rogers Y.-H."/>
            <person name="Friedman R."/>
            <person name="Frazier M."/>
            <person name="Venter J.C."/>
        </authorList>
    </citation>
    <scope>NUCLEOTIDE SEQUENCE [LARGE SCALE GENOMIC DNA]</scope>
    <source>
        <strain>MJ11</strain>
    </source>
</reference>
<evidence type="ECO:0000255" key="1">
    <source>
        <dbReference type="HAMAP-Rule" id="MF_01561"/>
    </source>
</evidence>
<accession>B5EUS9</accession>
<sequence>MRIQVDTHTHTYASGHAYSTIIENAFAASKLGLPMFCTTDHASSMPGAPHYWFFNNQRVLPRFIHNVAIVRGCEANICNDGEIDIPLSVDSHLDWVIASFHEPVFPSKDSLVHTQALIKVIRSNRVDALGHLGNPNFDFDFEAVIACAAEYNVAIELNNTSLKGETRIGSIDRCYEIAKVAKKLGAYVTTGSDAHFCEDIGKFSKVEQLIDDIDFPLDKVITHTPKQFLDFLALRGRAPIEEFKKLMV</sequence>
<feature type="chain" id="PRO_0000382661" description="Probable phosphatase VFMJ11_A0899">
    <location>
        <begin position="1"/>
        <end position="248"/>
    </location>
</feature>
<feature type="binding site" evidence="1">
    <location>
        <position position="8"/>
    </location>
    <ligand>
        <name>Zn(2+)</name>
        <dbReference type="ChEBI" id="CHEBI:29105"/>
        <label>1</label>
    </ligand>
</feature>
<feature type="binding site" evidence="1">
    <location>
        <position position="10"/>
    </location>
    <ligand>
        <name>Zn(2+)</name>
        <dbReference type="ChEBI" id="CHEBI:29105"/>
        <label>1</label>
    </ligand>
</feature>
<feature type="binding site" evidence="1">
    <location>
        <position position="16"/>
    </location>
    <ligand>
        <name>Zn(2+)</name>
        <dbReference type="ChEBI" id="CHEBI:29105"/>
        <label>2</label>
    </ligand>
</feature>
<feature type="binding site" evidence="1">
    <location>
        <position position="41"/>
    </location>
    <ligand>
        <name>Zn(2+)</name>
        <dbReference type="ChEBI" id="CHEBI:29105"/>
        <label>2</label>
    </ligand>
</feature>
<feature type="binding site" evidence="1">
    <location>
        <position position="74"/>
    </location>
    <ligand>
        <name>Zn(2+)</name>
        <dbReference type="ChEBI" id="CHEBI:29105"/>
        <label>1</label>
    </ligand>
</feature>
<feature type="binding site" evidence="1">
    <location>
        <position position="74"/>
    </location>
    <ligand>
        <name>Zn(2+)</name>
        <dbReference type="ChEBI" id="CHEBI:29105"/>
        <label>3</label>
    </ligand>
</feature>
<feature type="binding site" evidence="1">
    <location>
        <position position="101"/>
    </location>
    <ligand>
        <name>Zn(2+)</name>
        <dbReference type="ChEBI" id="CHEBI:29105"/>
        <label>3</label>
    </ligand>
</feature>
<feature type="binding site" evidence="1">
    <location>
        <position position="131"/>
    </location>
    <ligand>
        <name>Zn(2+)</name>
        <dbReference type="ChEBI" id="CHEBI:29105"/>
        <label>3</label>
    </ligand>
</feature>
<feature type="binding site" evidence="1">
    <location>
        <position position="193"/>
    </location>
    <ligand>
        <name>Zn(2+)</name>
        <dbReference type="ChEBI" id="CHEBI:29105"/>
        <label>1</label>
    </ligand>
</feature>
<feature type="binding site" evidence="1">
    <location>
        <position position="195"/>
    </location>
    <ligand>
        <name>Zn(2+)</name>
        <dbReference type="ChEBI" id="CHEBI:29105"/>
        <label>2</label>
    </ligand>
</feature>
<comment type="cofactor">
    <cofactor evidence="1">
        <name>Zn(2+)</name>
        <dbReference type="ChEBI" id="CHEBI:29105"/>
    </cofactor>
    <text evidence="1">Binds 3 Zn(2+) ions per subunit.</text>
</comment>
<comment type="similarity">
    <text evidence="1">Belongs to the PHP family.</text>
</comment>
<keyword id="KW-0378">Hydrolase</keyword>
<keyword id="KW-0479">Metal-binding</keyword>
<keyword id="KW-0862">Zinc</keyword>
<organism>
    <name type="scientific">Aliivibrio fischeri (strain MJ11)</name>
    <name type="common">Vibrio fischeri</name>
    <dbReference type="NCBI Taxonomy" id="388396"/>
    <lineage>
        <taxon>Bacteria</taxon>
        <taxon>Pseudomonadati</taxon>
        <taxon>Pseudomonadota</taxon>
        <taxon>Gammaproteobacteria</taxon>
        <taxon>Vibrionales</taxon>
        <taxon>Vibrionaceae</taxon>
        <taxon>Aliivibrio</taxon>
    </lineage>
</organism>
<protein>
    <recommendedName>
        <fullName evidence="1">Probable phosphatase VFMJ11_A0899</fullName>
        <ecNumber evidence="1">3.1.3.-</ecNumber>
    </recommendedName>
</protein>